<reference key="1">
    <citation type="journal article" date="2008" name="J. Bacteriol.">
        <title>The pangenome structure of Escherichia coli: comparative genomic analysis of E. coli commensal and pathogenic isolates.</title>
        <authorList>
            <person name="Rasko D.A."/>
            <person name="Rosovitz M.J."/>
            <person name="Myers G.S.A."/>
            <person name="Mongodin E.F."/>
            <person name="Fricke W.F."/>
            <person name="Gajer P."/>
            <person name="Crabtree J."/>
            <person name="Sebaihia M."/>
            <person name="Thomson N.R."/>
            <person name="Chaudhuri R."/>
            <person name="Henderson I.R."/>
            <person name="Sperandio V."/>
            <person name="Ravel J."/>
        </authorList>
    </citation>
    <scope>NUCLEOTIDE SEQUENCE [LARGE SCALE GENOMIC DNA]</scope>
    <source>
        <strain>E24377A / ETEC</strain>
    </source>
</reference>
<name>UVRB_ECO24</name>
<protein>
    <recommendedName>
        <fullName evidence="1">UvrABC system protein B</fullName>
        <shortName evidence="1">Protein UvrB</shortName>
    </recommendedName>
    <alternativeName>
        <fullName evidence="1">Excinuclease ABC subunit B</fullName>
    </alternativeName>
</protein>
<comment type="function">
    <text evidence="1">The UvrABC repair system catalyzes the recognition and processing of DNA lesions. A damage recognition complex composed of 2 UvrA and 2 UvrB subunits scans DNA for abnormalities. Upon binding of the UvrA(2)B(2) complex to a putative damaged site, the DNA wraps around one UvrB monomer. DNA wrap is dependent on ATP binding by UvrB and probably causes local melting of the DNA helix, facilitating insertion of UvrB beta-hairpin between the DNA strands. Then UvrB probes one DNA strand for the presence of a lesion. If a lesion is found the UvrA subunits dissociate and the UvrB-DNA preincision complex is formed. This complex is subsequently bound by UvrC and the second UvrB is released. If no lesion is found, the DNA wraps around the other UvrB subunit that will check the other stand for damage.</text>
</comment>
<comment type="subunit">
    <text evidence="1">Forms a heterotetramer with UvrA during the search for lesions. Interacts with UvrC in an incision complex.</text>
</comment>
<comment type="subcellular location">
    <subcellularLocation>
        <location evidence="1">Cytoplasm</location>
    </subcellularLocation>
</comment>
<comment type="domain">
    <text evidence="1">The beta-hairpin motif is involved in DNA binding.</text>
</comment>
<comment type="similarity">
    <text evidence="1">Belongs to the UvrB family.</text>
</comment>
<gene>
    <name evidence="1" type="primary">uvrB</name>
    <name type="ordered locus">EcE24377A_0842</name>
</gene>
<sequence>MSKPFKLNSAFKPSGDQPEAIRRLEEGLEDGLAHQTLLGVTGSGKTFTIANVIADLQRPTMVLAPNKTLAAQLYGEMKEFFPENAVEYFVSYYDYYQPEAYVPSSDTFIEKDASVNEHIEQMRLSATKAMLERRDVVVVASVSAIYGLGDPDLYLKMMLHLTVGMIIDQRAILRRLAELQYARNDQAFQRGTFRVRGEVIDIFPAESDDIALRVELFDEEVERLSLFDPLTGQIVSTIPRFTIYPKTHYVTPRERIVQAMEEIKEELAARRKVLLENNKLLEEQRLTQRTQFDLEMMNELGYCSGIENYSRFLSGRGPGEPPPTLFDYLPADGLLVVDESHVTIPQIGGMYRGDRARKETLVEYGFRLPSALDNRPLKFEEFEALAPQTIYVSATPGNYELEKSGGDVVDQVVRPTGLLDPIIEVRPVATQVDDLLSEIRQRAAINERVLVTTLTKRMAEDLTEYLEEHGERVRYLHSDIDTVERMEIIRDLRLGEFDVLVGINLLREGLDMPEVSLVAILDADKEGFLRSERSLIQTIGRAARNVNGKAILYGDKITPSMAKAIGETERRREKQQKYNEEHGITPQGLNKKVVDILALGQNIAKTKAKGRGKSRPIVEPDNVPMDMSPKALQQKIHELEGLMMQHAQNLEFEEAAQIRDQLHQLRELFIAAS</sequence>
<evidence type="ECO:0000255" key="1">
    <source>
        <dbReference type="HAMAP-Rule" id="MF_00204"/>
    </source>
</evidence>
<evidence type="ECO:0000256" key="2">
    <source>
        <dbReference type="SAM" id="MobiDB-lite"/>
    </source>
</evidence>
<accession>A7ZJI8</accession>
<dbReference type="EMBL" id="CP000800">
    <property type="protein sequence ID" value="ABV17012.1"/>
    <property type="molecule type" value="Genomic_DNA"/>
</dbReference>
<dbReference type="RefSeq" id="WP_000042533.1">
    <property type="nucleotide sequence ID" value="NC_009801.1"/>
</dbReference>
<dbReference type="BMRB" id="A7ZJI8"/>
<dbReference type="SMR" id="A7ZJI8"/>
<dbReference type="GeneID" id="93776651"/>
<dbReference type="KEGG" id="ecw:EcE24377A_0842"/>
<dbReference type="HOGENOM" id="CLU_009621_2_1_6"/>
<dbReference type="Proteomes" id="UP000001122">
    <property type="component" value="Chromosome"/>
</dbReference>
<dbReference type="GO" id="GO:0005737">
    <property type="term" value="C:cytoplasm"/>
    <property type="evidence" value="ECO:0007669"/>
    <property type="project" value="UniProtKB-SubCell"/>
</dbReference>
<dbReference type="GO" id="GO:0009380">
    <property type="term" value="C:excinuclease repair complex"/>
    <property type="evidence" value="ECO:0007669"/>
    <property type="project" value="InterPro"/>
</dbReference>
<dbReference type="GO" id="GO:0005524">
    <property type="term" value="F:ATP binding"/>
    <property type="evidence" value="ECO:0007669"/>
    <property type="project" value="UniProtKB-UniRule"/>
</dbReference>
<dbReference type="GO" id="GO:0016887">
    <property type="term" value="F:ATP hydrolysis activity"/>
    <property type="evidence" value="ECO:0007669"/>
    <property type="project" value="InterPro"/>
</dbReference>
<dbReference type="GO" id="GO:0003677">
    <property type="term" value="F:DNA binding"/>
    <property type="evidence" value="ECO:0007669"/>
    <property type="project" value="UniProtKB-UniRule"/>
</dbReference>
<dbReference type="GO" id="GO:0009381">
    <property type="term" value="F:excinuclease ABC activity"/>
    <property type="evidence" value="ECO:0007669"/>
    <property type="project" value="UniProtKB-UniRule"/>
</dbReference>
<dbReference type="GO" id="GO:0004386">
    <property type="term" value="F:helicase activity"/>
    <property type="evidence" value="ECO:0007669"/>
    <property type="project" value="UniProtKB-KW"/>
</dbReference>
<dbReference type="GO" id="GO:0006289">
    <property type="term" value="P:nucleotide-excision repair"/>
    <property type="evidence" value="ECO:0007669"/>
    <property type="project" value="UniProtKB-UniRule"/>
</dbReference>
<dbReference type="GO" id="GO:0009432">
    <property type="term" value="P:SOS response"/>
    <property type="evidence" value="ECO:0007669"/>
    <property type="project" value="UniProtKB-UniRule"/>
</dbReference>
<dbReference type="CDD" id="cd17916">
    <property type="entry name" value="DEXHc_UvrB"/>
    <property type="match status" value="1"/>
</dbReference>
<dbReference type="CDD" id="cd18790">
    <property type="entry name" value="SF2_C_UvrB"/>
    <property type="match status" value="1"/>
</dbReference>
<dbReference type="FunFam" id="3.40.50.300:FF:000257">
    <property type="entry name" value="UvrABC system protein B"/>
    <property type="match status" value="1"/>
</dbReference>
<dbReference type="FunFam" id="3.40.50.300:FF:000401">
    <property type="entry name" value="UvrABC system protein B"/>
    <property type="match status" value="1"/>
</dbReference>
<dbReference type="FunFam" id="3.40.50.300:FF:000477">
    <property type="entry name" value="UvrABC system protein B"/>
    <property type="match status" value="1"/>
</dbReference>
<dbReference type="Gene3D" id="3.40.50.300">
    <property type="entry name" value="P-loop containing nucleotide triphosphate hydrolases"/>
    <property type="match status" value="3"/>
</dbReference>
<dbReference type="Gene3D" id="4.10.860.10">
    <property type="entry name" value="UVR domain"/>
    <property type="match status" value="1"/>
</dbReference>
<dbReference type="HAMAP" id="MF_00204">
    <property type="entry name" value="UvrB"/>
    <property type="match status" value="1"/>
</dbReference>
<dbReference type="InterPro" id="IPR006935">
    <property type="entry name" value="Helicase/UvrB_N"/>
</dbReference>
<dbReference type="InterPro" id="IPR014001">
    <property type="entry name" value="Helicase_ATP-bd"/>
</dbReference>
<dbReference type="InterPro" id="IPR001650">
    <property type="entry name" value="Helicase_C-like"/>
</dbReference>
<dbReference type="InterPro" id="IPR027417">
    <property type="entry name" value="P-loop_NTPase"/>
</dbReference>
<dbReference type="InterPro" id="IPR001943">
    <property type="entry name" value="UVR_dom"/>
</dbReference>
<dbReference type="InterPro" id="IPR036876">
    <property type="entry name" value="UVR_dom_sf"/>
</dbReference>
<dbReference type="InterPro" id="IPR004807">
    <property type="entry name" value="UvrB"/>
</dbReference>
<dbReference type="InterPro" id="IPR041471">
    <property type="entry name" value="UvrB_inter"/>
</dbReference>
<dbReference type="InterPro" id="IPR024759">
    <property type="entry name" value="UvrB_YAD/RRR_dom"/>
</dbReference>
<dbReference type="NCBIfam" id="NF003673">
    <property type="entry name" value="PRK05298.1"/>
    <property type="match status" value="1"/>
</dbReference>
<dbReference type="NCBIfam" id="TIGR00631">
    <property type="entry name" value="uvrb"/>
    <property type="match status" value="1"/>
</dbReference>
<dbReference type="PANTHER" id="PTHR24029">
    <property type="entry name" value="UVRABC SYSTEM PROTEIN B"/>
    <property type="match status" value="1"/>
</dbReference>
<dbReference type="PANTHER" id="PTHR24029:SF0">
    <property type="entry name" value="UVRABC SYSTEM PROTEIN B"/>
    <property type="match status" value="1"/>
</dbReference>
<dbReference type="Pfam" id="PF00271">
    <property type="entry name" value="Helicase_C"/>
    <property type="match status" value="1"/>
</dbReference>
<dbReference type="Pfam" id="PF04851">
    <property type="entry name" value="ResIII"/>
    <property type="match status" value="1"/>
</dbReference>
<dbReference type="Pfam" id="PF02151">
    <property type="entry name" value="UVR"/>
    <property type="match status" value="1"/>
</dbReference>
<dbReference type="Pfam" id="PF12344">
    <property type="entry name" value="UvrB"/>
    <property type="match status" value="1"/>
</dbReference>
<dbReference type="Pfam" id="PF17757">
    <property type="entry name" value="UvrB_inter"/>
    <property type="match status" value="1"/>
</dbReference>
<dbReference type="SMART" id="SM00487">
    <property type="entry name" value="DEXDc"/>
    <property type="match status" value="1"/>
</dbReference>
<dbReference type="SMART" id="SM00490">
    <property type="entry name" value="HELICc"/>
    <property type="match status" value="1"/>
</dbReference>
<dbReference type="SUPFAM" id="SSF46600">
    <property type="entry name" value="C-terminal UvrC-binding domain of UvrB"/>
    <property type="match status" value="1"/>
</dbReference>
<dbReference type="SUPFAM" id="SSF52540">
    <property type="entry name" value="P-loop containing nucleoside triphosphate hydrolases"/>
    <property type="match status" value="2"/>
</dbReference>
<dbReference type="PROSITE" id="PS51192">
    <property type="entry name" value="HELICASE_ATP_BIND_1"/>
    <property type="match status" value="1"/>
</dbReference>
<dbReference type="PROSITE" id="PS51194">
    <property type="entry name" value="HELICASE_CTER"/>
    <property type="match status" value="1"/>
</dbReference>
<dbReference type="PROSITE" id="PS50151">
    <property type="entry name" value="UVR"/>
    <property type="match status" value="1"/>
</dbReference>
<organism>
    <name type="scientific">Escherichia coli O139:H28 (strain E24377A / ETEC)</name>
    <dbReference type="NCBI Taxonomy" id="331111"/>
    <lineage>
        <taxon>Bacteria</taxon>
        <taxon>Pseudomonadati</taxon>
        <taxon>Pseudomonadota</taxon>
        <taxon>Gammaproteobacteria</taxon>
        <taxon>Enterobacterales</taxon>
        <taxon>Enterobacteriaceae</taxon>
        <taxon>Escherichia</taxon>
    </lineage>
</organism>
<keyword id="KW-0067">ATP-binding</keyword>
<keyword id="KW-0963">Cytoplasm</keyword>
<keyword id="KW-0227">DNA damage</keyword>
<keyword id="KW-0228">DNA excision</keyword>
<keyword id="KW-0234">DNA repair</keyword>
<keyword id="KW-0267">Excision nuclease</keyword>
<keyword id="KW-0347">Helicase</keyword>
<keyword id="KW-0378">Hydrolase</keyword>
<keyword id="KW-0547">Nucleotide-binding</keyword>
<keyword id="KW-1185">Reference proteome</keyword>
<keyword id="KW-0742">SOS response</keyword>
<proteinExistence type="inferred from homology"/>
<feature type="chain" id="PRO_1000077886" description="UvrABC system protein B">
    <location>
        <begin position="1"/>
        <end position="673"/>
    </location>
</feature>
<feature type="domain" description="Helicase ATP-binding" evidence="1">
    <location>
        <begin position="26"/>
        <end position="183"/>
    </location>
</feature>
<feature type="domain" description="Helicase C-terminal" evidence="1">
    <location>
        <begin position="431"/>
        <end position="597"/>
    </location>
</feature>
<feature type="domain" description="UVR" evidence="1">
    <location>
        <begin position="633"/>
        <end position="668"/>
    </location>
</feature>
<feature type="region of interest" description="Disordered" evidence="2">
    <location>
        <begin position="608"/>
        <end position="627"/>
    </location>
</feature>
<feature type="short sequence motif" description="Beta-hairpin">
    <location>
        <begin position="92"/>
        <end position="115"/>
    </location>
</feature>
<feature type="binding site" evidence="1">
    <location>
        <begin position="39"/>
        <end position="46"/>
    </location>
    <ligand>
        <name>ATP</name>
        <dbReference type="ChEBI" id="CHEBI:30616"/>
    </ligand>
</feature>